<name>LEUC_ACTTI</name>
<keyword id="KW-0004">4Fe-4S</keyword>
<keyword id="KW-0028">Amino-acid biosynthesis</keyword>
<keyword id="KW-0100">Branched-chain amino acid biosynthesis</keyword>
<keyword id="KW-0408">Iron</keyword>
<keyword id="KW-0411">Iron-sulfur</keyword>
<keyword id="KW-0432">Leucine biosynthesis</keyword>
<keyword id="KW-0456">Lyase</keyword>
<keyword id="KW-0479">Metal-binding</keyword>
<evidence type="ECO:0000255" key="1">
    <source>
        <dbReference type="HAMAP-Rule" id="MF_01026"/>
    </source>
</evidence>
<evidence type="ECO:0000256" key="2">
    <source>
        <dbReference type="SAM" id="MobiDB-lite"/>
    </source>
</evidence>
<accession>Q44427</accession>
<proteinExistence type="inferred from homology"/>
<organism>
    <name type="scientific">Actinoplanes teichomyceticus</name>
    <dbReference type="NCBI Taxonomy" id="1867"/>
    <lineage>
        <taxon>Bacteria</taxon>
        <taxon>Bacillati</taxon>
        <taxon>Actinomycetota</taxon>
        <taxon>Actinomycetes</taxon>
        <taxon>Micromonosporales</taxon>
        <taxon>Micromonosporaceae</taxon>
        <taxon>Actinoplanes</taxon>
    </lineage>
</organism>
<protein>
    <recommendedName>
        <fullName evidence="1">3-isopropylmalate dehydratase large subunit</fullName>
        <ecNumber evidence="1">4.2.1.33</ecNumber>
    </recommendedName>
    <alternativeName>
        <fullName evidence="1">Alpha-IPM isomerase</fullName>
        <shortName evidence="1">IPMI</shortName>
    </alternativeName>
    <alternativeName>
        <fullName evidence="1">Isopropylmalate isomerase</fullName>
    </alternativeName>
</protein>
<gene>
    <name evidence="1" type="primary">leuC</name>
</gene>
<dbReference type="EC" id="4.2.1.33" evidence="1"/>
<dbReference type="EMBL" id="X84647">
    <property type="protein sequence ID" value="CAA59140.1"/>
    <property type="molecule type" value="Genomic_DNA"/>
</dbReference>
<dbReference type="PIR" id="I39699">
    <property type="entry name" value="I39699"/>
</dbReference>
<dbReference type="SMR" id="Q44427"/>
<dbReference type="UniPathway" id="UPA00048">
    <property type="reaction ID" value="UER00071"/>
</dbReference>
<dbReference type="GO" id="GO:0003861">
    <property type="term" value="F:3-isopropylmalate dehydratase activity"/>
    <property type="evidence" value="ECO:0007669"/>
    <property type="project" value="UniProtKB-UniRule"/>
</dbReference>
<dbReference type="GO" id="GO:0051539">
    <property type="term" value="F:4 iron, 4 sulfur cluster binding"/>
    <property type="evidence" value="ECO:0007669"/>
    <property type="project" value="UniProtKB-KW"/>
</dbReference>
<dbReference type="GO" id="GO:0046872">
    <property type="term" value="F:metal ion binding"/>
    <property type="evidence" value="ECO:0007669"/>
    <property type="project" value="UniProtKB-KW"/>
</dbReference>
<dbReference type="GO" id="GO:0009098">
    <property type="term" value="P:L-leucine biosynthetic process"/>
    <property type="evidence" value="ECO:0007669"/>
    <property type="project" value="UniProtKB-UniRule"/>
</dbReference>
<dbReference type="CDD" id="cd01583">
    <property type="entry name" value="IPMI"/>
    <property type="match status" value="1"/>
</dbReference>
<dbReference type="FunFam" id="3.30.499.10:FF:000007">
    <property type="entry name" value="3-isopropylmalate dehydratase large subunit"/>
    <property type="match status" value="1"/>
</dbReference>
<dbReference type="Gene3D" id="3.30.499.10">
    <property type="entry name" value="Aconitase, domain 3"/>
    <property type="match status" value="2"/>
</dbReference>
<dbReference type="HAMAP" id="MF_01026">
    <property type="entry name" value="LeuC_type1"/>
    <property type="match status" value="1"/>
</dbReference>
<dbReference type="InterPro" id="IPR004430">
    <property type="entry name" value="3-IsopropMal_deHydase_lsu"/>
</dbReference>
<dbReference type="InterPro" id="IPR015931">
    <property type="entry name" value="Acnase/IPM_dHydase_lsu_aba_1/3"/>
</dbReference>
<dbReference type="InterPro" id="IPR001030">
    <property type="entry name" value="Acoase/IPM_deHydtase_lsu_aba"/>
</dbReference>
<dbReference type="InterPro" id="IPR018136">
    <property type="entry name" value="Aconitase_4Fe-4S_BS"/>
</dbReference>
<dbReference type="InterPro" id="IPR036008">
    <property type="entry name" value="Aconitase_4Fe-4S_dom"/>
</dbReference>
<dbReference type="InterPro" id="IPR050067">
    <property type="entry name" value="IPM_dehydratase_rel_enz"/>
</dbReference>
<dbReference type="InterPro" id="IPR033941">
    <property type="entry name" value="IPMI_cat"/>
</dbReference>
<dbReference type="NCBIfam" id="TIGR00170">
    <property type="entry name" value="leuC"/>
    <property type="match status" value="1"/>
</dbReference>
<dbReference type="NCBIfam" id="NF004016">
    <property type="entry name" value="PRK05478.1"/>
    <property type="match status" value="1"/>
</dbReference>
<dbReference type="NCBIfam" id="NF009116">
    <property type="entry name" value="PRK12466.1"/>
    <property type="match status" value="1"/>
</dbReference>
<dbReference type="PANTHER" id="PTHR43822:SF9">
    <property type="entry name" value="3-ISOPROPYLMALATE DEHYDRATASE"/>
    <property type="match status" value="1"/>
</dbReference>
<dbReference type="PANTHER" id="PTHR43822">
    <property type="entry name" value="HOMOACONITASE, MITOCHONDRIAL-RELATED"/>
    <property type="match status" value="1"/>
</dbReference>
<dbReference type="Pfam" id="PF00330">
    <property type="entry name" value="Aconitase"/>
    <property type="match status" value="1"/>
</dbReference>
<dbReference type="PRINTS" id="PR00415">
    <property type="entry name" value="ACONITASE"/>
</dbReference>
<dbReference type="SUPFAM" id="SSF53732">
    <property type="entry name" value="Aconitase iron-sulfur domain"/>
    <property type="match status" value="1"/>
</dbReference>
<dbReference type="PROSITE" id="PS00450">
    <property type="entry name" value="ACONITASE_1"/>
    <property type="match status" value="1"/>
</dbReference>
<dbReference type="PROSITE" id="PS01244">
    <property type="entry name" value="ACONITASE_2"/>
    <property type="match status" value="1"/>
</dbReference>
<reference key="1">
    <citation type="journal article" date="1995" name="Gene">
        <title>Complementation of a Streptomyces lividans Leu- mutant by the Actinoplanes teichomyceticus leuC gene.</title>
        <authorList>
            <person name="Castelli P."/>
            <person name="Donadio S."/>
            <person name="Marinelli F."/>
            <person name="Borghi A."/>
            <person name="Sosio M."/>
        </authorList>
    </citation>
    <scope>NUCLEOTIDE SEQUENCE [GENOMIC DNA]</scope>
    <source>
        <strain>ATCC 31121 / DSM 43866 / BCRC 12106 / JCM 3252 / KCTC 9543 / NBRC 13999 / NCIMB 12640 / NRRL B-16726 /AB 8327</strain>
    </source>
</reference>
<feature type="chain" id="PRO_0000076688" description="3-isopropylmalate dehydratase large subunit">
    <location>
        <begin position="1"/>
        <end position="485"/>
    </location>
</feature>
<feature type="region of interest" description="Disordered" evidence="2">
    <location>
        <begin position="439"/>
        <end position="462"/>
    </location>
</feature>
<feature type="compositionally biased region" description="Polar residues" evidence="2">
    <location>
        <begin position="439"/>
        <end position="451"/>
    </location>
</feature>
<feature type="binding site" evidence="1">
    <location>
        <position position="367"/>
    </location>
    <ligand>
        <name>[4Fe-4S] cluster</name>
        <dbReference type="ChEBI" id="CHEBI:49883"/>
    </ligand>
</feature>
<feature type="binding site" evidence="1">
    <location>
        <position position="427"/>
    </location>
    <ligand>
        <name>[4Fe-4S] cluster</name>
        <dbReference type="ChEBI" id="CHEBI:49883"/>
    </ligand>
</feature>
<feature type="binding site" evidence="1">
    <location>
        <position position="430"/>
    </location>
    <ligand>
        <name>[4Fe-4S] cluster</name>
        <dbReference type="ChEBI" id="CHEBI:49883"/>
    </ligand>
</feature>
<sequence length="485" mass="51783">MVGVTPQSGKPRTLAEKVWDDHVVRTAAEGEPDLLFIDLHLLHEVTSPQAFDGLRMAGRRVRRTDLTLATEDHNTPTGYADPSFNTRRGELLTIADTVSRTQIETLRKNCAEFGVEIRPLGDVNQGIVHVIGPQLGLTQPGMTIVCGDSHTATHGASGALAFGIGTSEVEHVLATQTLPQSKPKTMAVTVVGELRPGVSAKDLILTLITQTGTGGGNGHIVEYRGEAIRKLSMEGRMTICNMSIEWGAKAGMIAPDETTFDYLSGRKHARRGADWDAAVAYWKTLATDEGAEYDTEIILDASKISPFITWGTNPGQGAALDGVVPDPQDFLDEVERGAAERALAYMGLTPGTPFRDVPVDVVFVGSCTNGRLEDLRAAADVIRGRKVADGVRMMIVPGSYQVREQAEAEGLDKIFIDAGAEWRFAGCSMCLGMNPDTLSPGQRAASTSNRNFEGRQGKGGRTHLVSPQVAAATAVVGKLAAPADL</sequence>
<comment type="function">
    <text evidence="1">Catalyzes the isomerization between 2-isopropylmalate and 3-isopropylmalate, via the formation of 2-isopropylmaleate.</text>
</comment>
<comment type="catalytic activity">
    <reaction evidence="1">
        <text>(2R,3S)-3-isopropylmalate = (2S)-2-isopropylmalate</text>
        <dbReference type="Rhea" id="RHEA:32287"/>
        <dbReference type="ChEBI" id="CHEBI:1178"/>
        <dbReference type="ChEBI" id="CHEBI:35121"/>
        <dbReference type="EC" id="4.2.1.33"/>
    </reaction>
</comment>
<comment type="cofactor">
    <cofactor evidence="1">
        <name>[4Fe-4S] cluster</name>
        <dbReference type="ChEBI" id="CHEBI:49883"/>
    </cofactor>
    <text evidence="1">Binds 1 [4Fe-4S] cluster per subunit.</text>
</comment>
<comment type="pathway">
    <text evidence="1">Amino-acid biosynthesis; L-leucine biosynthesis; L-leucine from 3-methyl-2-oxobutanoate: step 2/4.</text>
</comment>
<comment type="subunit">
    <text>Heterodimer of LeuC and LeuD.</text>
</comment>
<comment type="similarity">
    <text evidence="1">Belongs to the aconitase/IPM isomerase family. LeuC type 1 subfamily.</text>
</comment>